<protein>
    <recommendedName>
        <fullName evidence="1">DNA ligase</fullName>
        <ecNumber evidence="1">6.5.1.2</ecNumber>
    </recommendedName>
    <alternativeName>
        <fullName evidence="1">Polydeoxyribonucleotide synthase [NAD(+)]</fullName>
    </alternativeName>
</protein>
<evidence type="ECO:0000255" key="1">
    <source>
        <dbReference type="HAMAP-Rule" id="MF_01588"/>
    </source>
</evidence>
<accession>A5IFV1</accession>
<comment type="function">
    <text evidence="1">DNA ligase that catalyzes the formation of phosphodiester linkages between 5'-phosphoryl and 3'-hydroxyl groups in double-stranded DNA using NAD as a coenzyme and as the energy source for the reaction. It is essential for DNA replication and repair of damaged DNA.</text>
</comment>
<comment type="catalytic activity">
    <reaction evidence="1">
        <text>NAD(+) + (deoxyribonucleotide)n-3'-hydroxyl + 5'-phospho-(deoxyribonucleotide)m = (deoxyribonucleotide)n+m + AMP + beta-nicotinamide D-nucleotide.</text>
        <dbReference type="EC" id="6.5.1.2"/>
    </reaction>
</comment>
<comment type="cofactor">
    <cofactor evidence="1">
        <name>Mg(2+)</name>
        <dbReference type="ChEBI" id="CHEBI:18420"/>
    </cofactor>
    <cofactor evidence="1">
        <name>Mn(2+)</name>
        <dbReference type="ChEBI" id="CHEBI:29035"/>
    </cofactor>
</comment>
<comment type="similarity">
    <text evidence="1">Belongs to the NAD-dependent DNA ligase family. LigA subfamily.</text>
</comment>
<dbReference type="EC" id="6.5.1.2" evidence="1"/>
<dbReference type="EMBL" id="CP000675">
    <property type="protein sequence ID" value="ABQ56251.1"/>
    <property type="molecule type" value="Genomic_DNA"/>
</dbReference>
<dbReference type="RefSeq" id="WP_011946049.1">
    <property type="nucleotide sequence ID" value="NZ_JAPMSS010000002.1"/>
</dbReference>
<dbReference type="SMR" id="A5IFV1"/>
<dbReference type="KEGG" id="lpc:LPC_2329"/>
<dbReference type="HOGENOM" id="CLU_007764_2_1_6"/>
<dbReference type="GO" id="GO:0005829">
    <property type="term" value="C:cytosol"/>
    <property type="evidence" value="ECO:0007669"/>
    <property type="project" value="TreeGrafter"/>
</dbReference>
<dbReference type="GO" id="GO:0003677">
    <property type="term" value="F:DNA binding"/>
    <property type="evidence" value="ECO:0007669"/>
    <property type="project" value="InterPro"/>
</dbReference>
<dbReference type="GO" id="GO:0003911">
    <property type="term" value="F:DNA ligase (NAD+) activity"/>
    <property type="evidence" value="ECO:0007669"/>
    <property type="project" value="UniProtKB-UniRule"/>
</dbReference>
<dbReference type="GO" id="GO:0046872">
    <property type="term" value="F:metal ion binding"/>
    <property type="evidence" value="ECO:0007669"/>
    <property type="project" value="UniProtKB-KW"/>
</dbReference>
<dbReference type="GO" id="GO:0006281">
    <property type="term" value="P:DNA repair"/>
    <property type="evidence" value="ECO:0007669"/>
    <property type="project" value="UniProtKB-KW"/>
</dbReference>
<dbReference type="GO" id="GO:0006260">
    <property type="term" value="P:DNA replication"/>
    <property type="evidence" value="ECO:0007669"/>
    <property type="project" value="UniProtKB-KW"/>
</dbReference>
<dbReference type="CDD" id="cd17748">
    <property type="entry name" value="BRCT_DNA_ligase_like"/>
    <property type="match status" value="1"/>
</dbReference>
<dbReference type="CDD" id="cd00114">
    <property type="entry name" value="LIGANc"/>
    <property type="match status" value="1"/>
</dbReference>
<dbReference type="FunFam" id="1.10.150.20:FF:000006">
    <property type="entry name" value="DNA ligase"/>
    <property type="match status" value="1"/>
</dbReference>
<dbReference type="FunFam" id="1.10.150.20:FF:000007">
    <property type="entry name" value="DNA ligase"/>
    <property type="match status" value="1"/>
</dbReference>
<dbReference type="FunFam" id="2.40.50.140:FF:000012">
    <property type="entry name" value="DNA ligase"/>
    <property type="match status" value="1"/>
</dbReference>
<dbReference type="FunFam" id="3.30.470.30:FF:000001">
    <property type="entry name" value="DNA ligase"/>
    <property type="match status" value="1"/>
</dbReference>
<dbReference type="Gene3D" id="6.20.10.30">
    <property type="match status" value="1"/>
</dbReference>
<dbReference type="Gene3D" id="1.10.150.20">
    <property type="entry name" value="5' to 3' exonuclease, C-terminal subdomain"/>
    <property type="match status" value="2"/>
</dbReference>
<dbReference type="Gene3D" id="3.40.50.10190">
    <property type="entry name" value="BRCT domain"/>
    <property type="match status" value="1"/>
</dbReference>
<dbReference type="Gene3D" id="3.30.470.30">
    <property type="entry name" value="DNA ligase/mRNA capping enzyme"/>
    <property type="match status" value="1"/>
</dbReference>
<dbReference type="Gene3D" id="1.10.287.610">
    <property type="entry name" value="Helix hairpin bin"/>
    <property type="match status" value="1"/>
</dbReference>
<dbReference type="Gene3D" id="2.40.50.140">
    <property type="entry name" value="Nucleic acid-binding proteins"/>
    <property type="match status" value="1"/>
</dbReference>
<dbReference type="HAMAP" id="MF_01588">
    <property type="entry name" value="DNA_ligase_A"/>
    <property type="match status" value="1"/>
</dbReference>
<dbReference type="InterPro" id="IPR001357">
    <property type="entry name" value="BRCT_dom"/>
</dbReference>
<dbReference type="InterPro" id="IPR036420">
    <property type="entry name" value="BRCT_dom_sf"/>
</dbReference>
<dbReference type="InterPro" id="IPR041663">
    <property type="entry name" value="DisA/LigA_HHH"/>
</dbReference>
<dbReference type="InterPro" id="IPR001679">
    <property type="entry name" value="DNA_ligase"/>
</dbReference>
<dbReference type="InterPro" id="IPR018239">
    <property type="entry name" value="DNA_ligase_AS"/>
</dbReference>
<dbReference type="InterPro" id="IPR033136">
    <property type="entry name" value="DNA_ligase_CS"/>
</dbReference>
<dbReference type="InterPro" id="IPR013839">
    <property type="entry name" value="DNAligase_adenylation"/>
</dbReference>
<dbReference type="InterPro" id="IPR013840">
    <property type="entry name" value="DNAligase_N"/>
</dbReference>
<dbReference type="InterPro" id="IPR003583">
    <property type="entry name" value="Hlx-hairpin-Hlx_DNA-bd_motif"/>
</dbReference>
<dbReference type="InterPro" id="IPR012340">
    <property type="entry name" value="NA-bd_OB-fold"/>
</dbReference>
<dbReference type="InterPro" id="IPR004150">
    <property type="entry name" value="NAD_DNA_ligase_OB"/>
</dbReference>
<dbReference type="InterPro" id="IPR010994">
    <property type="entry name" value="RuvA_2-like"/>
</dbReference>
<dbReference type="InterPro" id="IPR004149">
    <property type="entry name" value="Znf_DNAligase_C4"/>
</dbReference>
<dbReference type="NCBIfam" id="TIGR00575">
    <property type="entry name" value="dnlj"/>
    <property type="match status" value="1"/>
</dbReference>
<dbReference type="NCBIfam" id="NF005932">
    <property type="entry name" value="PRK07956.1"/>
    <property type="match status" value="1"/>
</dbReference>
<dbReference type="PANTHER" id="PTHR23389">
    <property type="entry name" value="CHROMOSOME TRANSMISSION FIDELITY FACTOR 18"/>
    <property type="match status" value="1"/>
</dbReference>
<dbReference type="PANTHER" id="PTHR23389:SF9">
    <property type="entry name" value="DNA LIGASE"/>
    <property type="match status" value="1"/>
</dbReference>
<dbReference type="Pfam" id="PF00533">
    <property type="entry name" value="BRCT"/>
    <property type="match status" value="1"/>
</dbReference>
<dbReference type="Pfam" id="PF01653">
    <property type="entry name" value="DNA_ligase_aden"/>
    <property type="match status" value="1"/>
</dbReference>
<dbReference type="Pfam" id="PF03120">
    <property type="entry name" value="DNA_ligase_OB"/>
    <property type="match status" value="1"/>
</dbReference>
<dbReference type="Pfam" id="PF03119">
    <property type="entry name" value="DNA_ligase_ZBD"/>
    <property type="match status" value="1"/>
</dbReference>
<dbReference type="Pfam" id="PF12826">
    <property type="entry name" value="HHH_2"/>
    <property type="match status" value="1"/>
</dbReference>
<dbReference type="Pfam" id="PF14520">
    <property type="entry name" value="HHH_5"/>
    <property type="match status" value="1"/>
</dbReference>
<dbReference type="Pfam" id="PF22745">
    <property type="entry name" value="Nlig-Ia"/>
    <property type="match status" value="1"/>
</dbReference>
<dbReference type="PIRSF" id="PIRSF001604">
    <property type="entry name" value="LigA"/>
    <property type="match status" value="1"/>
</dbReference>
<dbReference type="SMART" id="SM00292">
    <property type="entry name" value="BRCT"/>
    <property type="match status" value="1"/>
</dbReference>
<dbReference type="SMART" id="SM00278">
    <property type="entry name" value="HhH1"/>
    <property type="match status" value="4"/>
</dbReference>
<dbReference type="SMART" id="SM00532">
    <property type="entry name" value="LIGANc"/>
    <property type="match status" value="1"/>
</dbReference>
<dbReference type="SUPFAM" id="SSF52113">
    <property type="entry name" value="BRCT domain"/>
    <property type="match status" value="1"/>
</dbReference>
<dbReference type="SUPFAM" id="SSF56091">
    <property type="entry name" value="DNA ligase/mRNA capping enzyme, catalytic domain"/>
    <property type="match status" value="1"/>
</dbReference>
<dbReference type="SUPFAM" id="SSF50249">
    <property type="entry name" value="Nucleic acid-binding proteins"/>
    <property type="match status" value="1"/>
</dbReference>
<dbReference type="SUPFAM" id="SSF47781">
    <property type="entry name" value="RuvA domain 2-like"/>
    <property type="match status" value="1"/>
</dbReference>
<dbReference type="PROSITE" id="PS50172">
    <property type="entry name" value="BRCT"/>
    <property type="match status" value="1"/>
</dbReference>
<dbReference type="PROSITE" id="PS01055">
    <property type="entry name" value="DNA_LIGASE_N1"/>
    <property type="match status" value="1"/>
</dbReference>
<dbReference type="PROSITE" id="PS01056">
    <property type="entry name" value="DNA_LIGASE_N2"/>
    <property type="match status" value="1"/>
</dbReference>
<gene>
    <name evidence="1" type="primary">ligA</name>
    <name type="ordered locus">LPC_2329</name>
</gene>
<organism>
    <name type="scientific">Legionella pneumophila (strain Corby)</name>
    <dbReference type="NCBI Taxonomy" id="400673"/>
    <lineage>
        <taxon>Bacteria</taxon>
        <taxon>Pseudomonadati</taxon>
        <taxon>Pseudomonadota</taxon>
        <taxon>Gammaproteobacteria</taxon>
        <taxon>Legionellales</taxon>
        <taxon>Legionellaceae</taxon>
        <taxon>Legionella</taxon>
    </lineage>
</organism>
<keyword id="KW-0227">DNA damage</keyword>
<keyword id="KW-0234">DNA repair</keyword>
<keyword id="KW-0235">DNA replication</keyword>
<keyword id="KW-0436">Ligase</keyword>
<keyword id="KW-0460">Magnesium</keyword>
<keyword id="KW-0464">Manganese</keyword>
<keyword id="KW-0479">Metal-binding</keyword>
<keyword id="KW-0520">NAD</keyword>
<keyword id="KW-0862">Zinc</keyword>
<feature type="chain" id="PRO_0000313285" description="DNA ligase">
    <location>
        <begin position="1"/>
        <end position="673"/>
    </location>
</feature>
<feature type="domain" description="BRCT" evidence="1">
    <location>
        <begin position="595"/>
        <end position="673"/>
    </location>
</feature>
<feature type="active site" description="N6-AMP-lysine intermediate" evidence="1">
    <location>
        <position position="118"/>
    </location>
</feature>
<feature type="binding site" evidence="1">
    <location>
        <begin position="34"/>
        <end position="38"/>
    </location>
    <ligand>
        <name>NAD(+)</name>
        <dbReference type="ChEBI" id="CHEBI:57540"/>
    </ligand>
</feature>
<feature type="binding site" evidence="1">
    <location>
        <begin position="83"/>
        <end position="84"/>
    </location>
    <ligand>
        <name>NAD(+)</name>
        <dbReference type="ChEBI" id="CHEBI:57540"/>
    </ligand>
</feature>
<feature type="binding site" evidence="1">
    <location>
        <position position="116"/>
    </location>
    <ligand>
        <name>NAD(+)</name>
        <dbReference type="ChEBI" id="CHEBI:57540"/>
    </ligand>
</feature>
<feature type="binding site" evidence="1">
    <location>
        <position position="139"/>
    </location>
    <ligand>
        <name>NAD(+)</name>
        <dbReference type="ChEBI" id="CHEBI:57540"/>
    </ligand>
</feature>
<feature type="binding site" evidence="1">
    <location>
        <position position="176"/>
    </location>
    <ligand>
        <name>NAD(+)</name>
        <dbReference type="ChEBI" id="CHEBI:57540"/>
    </ligand>
</feature>
<feature type="binding site" evidence="1">
    <location>
        <position position="293"/>
    </location>
    <ligand>
        <name>NAD(+)</name>
        <dbReference type="ChEBI" id="CHEBI:57540"/>
    </ligand>
</feature>
<feature type="binding site" evidence="1">
    <location>
        <position position="317"/>
    </location>
    <ligand>
        <name>NAD(+)</name>
        <dbReference type="ChEBI" id="CHEBI:57540"/>
    </ligand>
</feature>
<feature type="binding site" evidence="1">
    <location>
        <position position="411"/>
    </location>
    <ligand>
        <name>Zn(2+)</name>
        <dbReference type="ChEBI" id="CHEBI:29105"/>
    </ligand>
</feature>
<feature type="binding site" evidence="1">
    <location>
        <position position="414"/>
    </location>
    <ligand>
        <name>Zn(2+)</name>
        <dbReference type="ChEBI" id="CHEBI:29105"/>
    </ligand>
</feature>
<feature type="binding site" evidence="1">
    <location>
        <position position="429"/>
    </location>
    <ligand>
        <name>Zn(2+)</name>
        <dbReference type="ChEBI" id="CHEBI:29105"/>
    </ligand>
</feature>
<feature type="binding site" evidence="1">
    <location>
        <position position="435"/>
    </location>
    <ligand>
        <name>Zn(2+)</name>
        <dbReference type="ChEBI" id="CHEBI:29105"/>
    </ligand>
</feature>
<name>DNLJ_LEGPC</name>
<sequence>MNDQGIKESIETLKEQIRKYDYHYYVLDEPLVPDAEYDRCFKALQQYEEQYPQFLSPDSPTQRVSGTPSDAFMPVAHKQAMLSLSNVFTTDELKAFIKRAIEKLDEPNQQLVFACEPKLDGLAVNMTYEGGILTHAATRGDGAVGENITANIKTIASVPLRLRVSNPPKLIEVRGEVYIPKADFEAYNARARELGEKTFANPRNAAAGSLRQLNPEISASRPLAIYCYGIGACEDYKLPNSHLEQLNLLKEFGFRVSPETRRAVGVEGCLDYYQYMLAKRNQLPFEIDGVVYKIDSISLQQQLGYVSRAPRFACAHKFPATEEMTRLIAVDFQVGRTGAVTPVARLEPVSVGGVTVSNATLHNFDEITRKDIHIGDTVIIRRAGDVIPEVVSVILEKRPANARKIELPKNCPVCGSEVVREADEAIARCVGGLYCKAQLKRMMWHFASRKAMYIEGLGSVLIDQLVDEGIVHHLADLYELDLQTLANLPRMGEKSAKNLLSALEKSKKTTFNRFLYALGIREIGEAGARVLAEHYCDVESLKAATIEELMTLNDIGPVAASHIVHFFAQAHNLEVIDRLLELGIHWPKPEKIQVNQQNPFFGKTVVLTGTLSTMGREEAKAKLLALGAKVSGSVSSKTDYLVAGSEAGSKLVKATELGVAIIEEDEFLKWVNS</sequence>
<proteinExistence type="inferred from homology"/>
<reference key="1">
    <citation type="submission" date="2006-11" db="EMBL/GenBank/DDBJ databases">
        <title>Identification and characterization of a new conjugation/ type IVA secretion system (trb/tra) of L. pneumophila Corby localized on a mobile genomic island.</title>
        <authorList>
            <person name="Gloeckner G."/>
            <person name="Albert-Weissenberger C."/>
            <person name="Weinmann E."/>
            <person name="Jacobi S."/>
            <person name="Schunder E."/>
            <person name="Steinert M."/>
            <person name="Buchrieser C."/>
            <person name="Hacker J."/>
            <person name="Heuner K."/>
        </authorList>
    </citation>
    <scope>NUCLEOTIDE SEQUENCE [LARGE SCALE GENOMIC DNA]</scope>
    <source>
        <strain>Corby</strain>
    </source>
</reference>